<organism>
    <name type="scientific">Escherichia coli O45:K1 (strain S88 / ExPEC)</name>
    <dbReference type="NCBI Taxonomy" id="585035"/>
    <lineage>
        <taxon>Bacteria</taxon>
        <taxon>Pseudomonadati</taxon>
        <taxon>Pseudomonadota</taxon>
        <taxon>Gammaproteobacteria</taxon>
        <taxon>Enterobacterales</taxon>
        <taxon>Enterobacteriaceae</taxon>
        <taxon>Escherichia</taxon>
    </lineage>
</organism>
<dbReference type="EC" id="3.6.1.-" evidence="1"/>
<dbReference type="EMBL" id="CU928161">
    <property type="protein sequence ID" value="CAR03171.1"/>
    <property type="molecule type" value="Genomic_DNA"/>
</dbReference>
<dbReference type="RefSeq" id="WP_000456725.1">
    <property type="nucleotide sequence ID" value="NC_011742.1"/>
</dbReference>
<dbReference type="SMR" id="B7MBL9"/>
<dbReference type="KEGG" id="ecz:ECS88_1865"/>
<dbReference type="HOGENOM" id="CLU_040940_5_2_6"/>
<dbReference type="Proteomes" id="UP000000747">
    <property type="component" value="Chromosome"/>
</dbReference>
<dbReference type="GO" id="GO:0010945">
    <property type="term" value="F:coenzyme A diphosphatase activity"/>
    <property type="evidence" value="ECO:0007669"/>
    <property type="project" value="InterPro"/>
</dbReference>
<dbReference type="GO" id="GO:0000287">
    <property type="term" value="F:magnesium ion binding"/>
    <property type="evidence" value="ECO:0007669"/>
    <property type="project" value="UniProtKB-UniRule"/>
</dbReference>
<dbReference type="GO" id="GO:0030145">
    <property type="term" value="F:manganese ion binding"/>
    <property type="evidence" value="ECO:0007669"/>
    <property type="project" value="UniProtKB-UniRule"/>
</dbReference>
<dbReference type="GO" id="GO:0009132">
    <property type="term" value="P:nucleoside diphosphate metabolic process"/>
    <property type="evidence" value="ECO:0007669"/>
    <property type="project" value="InterPro"/>
</dbReference>
<dbReference type="CDD" id="cd03426">
    <property type="entry name" value="NUDIX_CoAse_Nudt7"/>
    <property type="match status" value="1"/>
</dbReference>
<dbReference type="FunFam" id="3.90.79.10:FF:000013">
    <property type="entry name" value="Uncharacterized Nudix hydrolase NudL"/>
    <property type="match status" value="1"/>
</dbReference>
<dbReference type="Gene3D" id="3.90.79.10">
    <property type="entry name" value="Nucleoside Triphosphate Pyrophosphohydrolase"/>
    <property type="match status" value="1"/>
</dbReference>
<dbReference type="HAMAP" id="MF_01592">
    <property type="entry name" value="Nudix_NudL"/>
    <property type="match status" value="1"/>
</dbReference>
<dbReference type="InterPro" id="IPR045121">
    <property type="entry name" value="CoAse"/>
</dbReference>
<dbReference type="InterPro" id="IPR015797">
    <property type="entry name" value="NUDIX_hydrolase-like_dom_sf"/>
</dbReference>
<dbReference type="InterPro" id="IPR000086">
    <property type="entry name" value="NUDIX_hydrolase_dom"/>
</dbReference>
<dbReference type="InterPro" id="IPR000059">
    <property type="entry name" value="NUDIX_hydrolase_NudL_CS"/>
</dbReference>
<dbReference type="InterPro" id="IPR023735">
    <property type="entry name" value="Nudix_NudL"/>
</dbReference>
<dbReference type="NCBIfam" id="NF007980">
    <property type="entry name" value="PRK10707.1"/>
    <property type="match status" value="1"/>
</dbReference>
<dbReference type="PANTHER" id="PTHR12992:SF11">
    <property type="entry name" value="MITOCHONDRIAL COENZYME A DIPHOSPHATASE NUDT8"/>
    <property type="match status" value="1"/>
</dbReference>
<dbReference type="PANTHER" id="PTHR12992">
    <property type="entry name" value="NUDIX HYDROLASE"/>
    <property type="match status" value="1"/>
</dbReference>
<dbReference type="Pfam" id="PF00293">
    <property type="entry name" value="NUDIX"/>
    <property type="match status" value="1"/>
</dbReference>
<dbReference type="SUPFAM" id="SSF55811">
    <property type="entry name" value="Nudix"/>
    <property type="match status" value="1"/>
</dbReference>
<dbReference type="PROSITE" id="PS51462">
    <property type="entry name" value="NUDIX"/>
    <property type="match status" value="1"/>
</dbReference>
<dbReference type="PROSITE" id="PS01293">
    <property type="entry name" value="NUDIX_COA"/>
    <property type="match status" value="1"/>
</dbReference>
<proteinExistence type="inferred from homology"/>
<reference key="1">
    <citation type="journal article" date="2009" name="PLoS Genet.">
        <title>Organised genome dynamics in the Escherichia coli species results in highly diverse adaptive paths.</title>
        <authorList>
            <person name="Touchon M."/>
            <person name="Hoede C."/>
            <person name="Tenaillon O."/>
            <person name="Barbe V."/>
            <person name="Baeriswyl S."/>
            <person name="Bidet P."/>
            <person name="Bingen E."/>
            <person name="Bonacorsi S."/>
            <person name="Bouchier C."/>
            <person name="Bouvet O."/>
            <person name="Calteau A."/>
            <person name="Chiapello H."/>
            <person name="Clermont O."/>
            <person name="Cruveiller S."/>
            <person name="Danchin A."/>
            <person name="Diard M."/>
            <person name="Dossat C."/>
            <person name="Karoui M.E."/>
            <person name="Frapy E."/>
            <person name="Garry L."/>
            <person name="Ghigo J.M."/>
            <person name="Gilles A.M."/>
            <person name="Johnson J."/>
            <person name="Le Bouguenec C."/>
            <person name="Lescat M."/>
            <person name="Mangenot S."/>
            <person name="Martinez-Jehanne V."/>
            <person name="Matic I."/>
            <person name="Nassif X."/>
            <person name="Oztas S."/>
            <person name="Petit M.A."/>
            <person name="Pichon C."/>
            <person name="Rouy Z."/>
            <person name="Ruf C.S."/>
            <person name="Schneider D."/>
            <person name="Tourret J."/>
            <person name="Vacherie B."/>
            <person name="Vallenet D."/>
            <person name="Medigue C."/>
            <person name="Rocha E.P.C."/>
            <person name="Denamur E."/>
        </authorList>
    </citation>
    <scope>NUCLEOTIDE SEQUENCE [LARGE SCALE GENOMIC DNA]</scope>
    <source>
        <strain>S88 / ExPEC</strain>
    </source>
</reference>
<name>NUDL_ECO45</name>
<sequence length="192" mass="21464">MEYRSLTLDDFLSRFQLLRPQINRETLNHRQAAVLIPIVRRPQPGLLLTQRSIHLRKHAGQVAFPGGAVDDTDASVIAAALREAEEEVAIPPSAVEVIGVLPPVDSVTGYQVTPVVGIIPPDLPYRASEDEVSAVFEMPLAQALHLGRYHPLDIYRRGDSHRVWLSWYEQYFVWGMTAGIIRELALQIGVKP</sequence>
<keyword id="KW-0378">Hydrolase</keyword>
<keyword id="KW-0460">Magnesium</keyword>
<keyword id="KW-0464">Manganese</keyword>
<keyword id="KW-0479">Metal-binding</keyword>
<keyword id="KW-1185">Reference proteome</keyword>
<gene>
    <name evidence="1" type="primary">nudL</name>
    <name type="ordered locus">ECS88_1865</name>
</gene>
<evidence type="ECO:0000255" key="1">
    <source>
        <dbReference type="HAMAP-Rule" id="MF_01592"/>
    </source>
</evidence>
<comment type="function">
    <text evidence="1">Probably mediates the hydrolysis of some nucleoside diphosphate derivatives.</text>
</comment>
<comment type="cofactor">
    <cofactor evidence="1">
        <name>Mn(2+)</name>
        <dbReference type="ChEBI" id="CHEBI:29035"/>
    </cofactor>
    <cofactor evidence="1">
        <name>Mg(2+)</name>
        <dbReference type="ChEBI" id="CHEBI:18420"/>
    </cofactor>
</comment>
<comment type="similarity">
    <text evidence="1">Belongs to the Nudix hydrolase family. PCD1 subfamily.</text>
</comment>
<feature type="chain" id="PRO_1000147812" description="Uncharacterized Nudix hydrolase NudL">
    <location>
        <begin position="1"/>
        <end position="192"/>
    </location>
</feature>
<feature type="domain" description="Nudix hydrolase" evidence="1">
    <location>
        <begin position="29"/>
        <end position="160"/>
    </location>
</feature>
<feature type="short sequence motif" description="Nudix box">
    <location>
        <begin position="67"/>
        <end position="89"/>
    </location>
</feature>
<feature type="binding site" evidence="1">
    <location>
        <position position="83"/>
    </location>
    <ligand>
        <name>Mg(2+)</name>
        <dbReference type="ChEBI" id="CHEBI:18420"/>
    </ligand>
</feature>
<feature type="binding site" evidence="1">
    <location>
        <position position="87"/>
    </location>
    <ligand>
        <name>Mg(2+)</name>
        <dbReference type="ChEBI" id="CHEBI:18420"/>
    </ligand>
</feature>
<protein>
    <recommendedName>
        <fullName evidence="1">Uncharacterized Nudix hydrolase NudL</fullName>
        <ecNumber evidence="1">3.6.1.-</ecNumber>
    </recommendedName>
</protein>
<accession>B7MBL9</accession>